<reference key="1">
    <citation type="journal article" date="2002" name="Proc. Natl. Acad. Sci. U.S.A.">
        <title>The Brucella suis genome reveals fundamental similarities between animal and plant pathogens and symbionts.</title>
        <authorList>
            <person name="Paulsen I.T."/>
            <person name="Seshadri R."/>
            <person name="Nelson K.E."/>
            <person name="Eisen J.A."/>
            <person name="Heidelberg J.F."/>
            <person name="Read T.D."/>
            <person name="Dodson R.J."/>
            <person name="Umayam L.A."/>
            <person name="Brinkac L.M."/>
            <person name="Beanan M.J."/>
            <person name="Daugherty S.C."/>
            <person name="DeBoy R.T."/>
            <person name="Durkin A.S."/>
            <person name="Kolonay J.F."/>
            <person name="Madupu R."/>
            <person name="Nelson W.C."/>
            <person name="Ayodeji B."/>
            <person name="Kraul M."/>
            <person name="Shetty J."/>
            <person name="Malek J.A."/>
            <person name="Van Aken S.E."/>
            <person name="Riedmuller S."/>
            <person name="Tettelin H."/>
            <person name="Gill S.R."/>
            <person name="White O."/>
            <person name="Salzberg S.L."/>
            <person name="Hoover D.L."/>
            <person name="Lindler L.E."/>
            <person name="Halling S.M."/>
            <person name="Boyle S.M."/>
            <person name="Fraser C.M."/>
        </authorList>
    </citation>
    <scope>NUCLEOTIDE SEQUENCE [LARGE SCALE GENOMIC DNA]</scope>
    <source>
        <strain>1330</strain>
    </source>
</reference>
<reference key="2">
    <citation type="journal article" date="2011" name="J. Bacteriol.">
        <title>Revised genome sequence of Brucella suis 1330.</title>
        <authorList>
            <person name="Tae H."/>
            <person name="Shallom S."/>
            <person name="Settlage R."/>
            <person name="Preston D."/>
            <person name="Adams L.G."/>
            <person name="Garner H.R."/>
        </authorList>
    </citation>
    <scope>NUCLEOTIDE SEQUENCE [LARGE SCALE GENOMIC DNA]</scope>
    <source>
        <strain>1330</strain>
    </source>
</reference>
<keyword id="KW-0963">Cytoplasm</keyword>
<keyword id="KW-0489">Methyltransferase</keyword>
<keyword id="KW-0698">rRNA processing</keyword>
<keyword id="KW-0949">S-adenosyl-L-methionine</keyword>
<keyword id="KW-0808">Transferase</keyword>
<comment type="function">
    <text evidence="1">Specifically methylates the pseudouridine at position 1915 (m3Psi1915) in 23S rRNA.</text>
</comment>
<comment type="catalytic activity">
    <reaction evidence="1">
        <text>pseudouridine(1915) in 23S rRNA + S-adenosyl-L-methionine = N(3)-methylpseudouridine(1915) in 23S rRNA + S-adenosyl-L-homocysteine + H(+)</text>
        <dbReference type="Rhea" id="RHEA:42752"/>
        <dbReference type="Rhea" id="RHEA-COMP:10221"/>
        <dbReference type="Rhea" id="RHEA-COMP:10222"/>
        <dbReference type="ChEBI" id="CHEBI:15378"/>
        <dbReference type="ChEBI" id="CHEBI:57856"/>
        <dbReference type="ChEBI" id="CHEBI:59789"/>
        <dbReference type="ChEBI" id="CHEBI:65314"/>
        <dbReference type="ChEBI" id="CHEBI:74486"/>
        <dbReference type="EC" id="2.1.1.177"/>
    </reaction>
</comment>
<comment type="subunit">
    <text evidence="1">Homodimer.</text>
</comment>
<comment type="subcellular location">
    <subcellularLocation>
        <location evidence="1">Cytoplasm</location>
    </subcellularLocation>
</comment>
<comment type="similarity">
    <text evidence="1">Belongs to the RNA methyltransferase RlmH family.</text>
</comment>
<feature type="chain" id="PRO_0000198103" description="Ribosomal RNA large subunit methyltransferase H">
    <location>
        <begin position="1"/>
        <end position="174"/>
    </location>
</feature>
<feature type="binding site" evidence="1">
    <location>
        <position position="90"/>
    </location>
    <ligand>
        <name>S-adenosyl-L-methionine</name>
        <dbReference type="ChEBI" id="CHEBI:59789"/>
    </ligand>
</feature>
<feature type="binding site" evidence="1">
    <location>
        <position position="122"/>
    </location>
    <ligand>
        <name>S-adenosyl-L-methionine</name>
        <dbReference type="ChEBI" id="CHEBI:59789"/>
    </ligand>
</feature>
<feature type="binding site" evidence="1">
    <location>
        <begin position="141"/>
        <end position="146"/>
    </location>
    <ligand>
        <name>S-adenosyl-L-methionine</name>
        <dbReference type="ChEBI" id="CHEBI:59789"/>
    </ligand>
</feature>
<dbReference type="EC" id="2.1.1.177" evidence="1"/>
<dbReference type="EMBL" id="AE014291">
    <property type="protein sequence ID" value="AAN30735.1"/>
    <property type="molecule type" value="Genomic_DNA"/>
</dbReference>
<dbReference type="EMBL" id="CP002997">
    <property type="protein sequence ID" value="AEM19152.1"/>
    <property type="molecule type" value="Genomic_DNA"/>
</dbReference>
<dbReference type="RefSeq" id="WP_004684318.1">
    <property type="nucleotide sequence ID" value="NZ_KN046804.1"/>
</dbReference>
<dbReference type="SMR" id="P67517"/>
<dbReference type="GeneID" id="97533039"/>
<dbReference type="KEGG" id="bms:BR1840"/>
<dbReference type="KEGG" id="bsi:BS1330_I1834"/>
<dbReference type="PATRIC" id="fig|204722.21.peg.3457"/>
<dbReference type="HOGENOM" id="CLU_100552_1_1_5"/>
<dbReference type="PhylomeDB" id="P67517"/>
<dbReference type="Proteomes" id="UP000007104">
    <property type="component" value="Chromosome I"/>
</dbReference>
<dbReference type="GO" id="GO:0005737">
    <property type="term" value="C:cytoplasm"/>
    <property type="evidence" value="ECO:0007669"/>
    <property type="project" value="UniProtKB-SubCell"/>
</dbReference>
<dbReference type="GO" id="GO:0070038">
    <property type="term" value="F:rRNA (pseudouridine-N3-)-methyltransferase activity"/>
    <property type="evidence" value="ECO:0007669"/>
    <property type="project" value="UniProtKB-UniRule"/>
</dbReference>
<dbReference type="CDD" id="cd18081">
    <property type="entry name" value="RlmH-like"/>
    <property type="match status" value="1"/>
</dbReference>
<dbReference type="Gene3D" id="3.40.1280.10">
    <property type="match status" value="1"/>
</dbReference>
<dbReference type="HAMAP" id="MF_00658">
    <property type="entry name" value="23SrRNA_methyltr_H"/>
    <property type="match status" value="1"/>
</dbReference>
<dbReference type="InterPro" id="IPR029028">
    <property type="entry name" value="Alpha/beta_knot_MTases"/>
</dbReference>
<dbReference type="InterPro" id="IPR003742">
    <property type="entry name" value="RlmH-like"/>
</dbReference>
<dbReference type="InterPro" id="IPR029026">
    <property type="entry name" value="tRNA_m1G_MTases_N"/>
</dbReference>
<dbReference type="NCBIfam" id="NF000989">
    <property type="entry name" value="PRK00103.2-3"/>
    <property type="match status" value="1"/>
</dbReference>
<dbReference type="PANTHER" id="PTHR33603">
    <property type="entry name" value="METHYLTRANSFERASE"/>
    <property type="match status" value="1"/>
</dbReference>
<dbReference type="PANTHER" id="PTHR33603:SF1">
    <property type="entry name" value="RIBOSOMAL RNA LARGE SUBUNIT METHYLTRANSFERASE H"/>
    <property type="match status" value="1"/>
</dbReference>
<dbReference type="Pfam" id="PF02590">
    <property type="entry name" value="SPOUT_MTase"/>
    <property type="match status" value="1"/>
</dbReference>
<dbReference type="PIRSF" id="PIRSF004505">
    <property type="entry name" value="MT_bac"/>
    <property type="match status" value="1"/>
</dbReference>
<dbReference type="SUPFAM" id="SSF75217">
    <property type="entry name" value="alpha/beta knot"/>
    <property type="match status" value="1"/>
</dbReference>
<protein>
    <recommendedName>
        <fullName evidence="1">Ribosomal RNA large subunit methyltransferase H</fullName>
        <ecNumber evidence="1">2.1.1.177</ecNumber>
    </recommendedName>
    <alternativeName>
        <fullName evidence="1">23S rRNA (pseudouridine1915-N3)-methyltransferase</fullName>
    </alternativeName>
    <alternativeName>
        <fullName evidence="1">23S rRNA m3Psi1915 methyltransferase</fullName>
    </alternativeName>
    <alternativeName>
        <fullName evidence="1">rRNA (pseudouridine-N3-)-methyltransferase RlmH</fullName>
    </alternativeName>
</protein>
<sequence length="174" mass="18649">MRVSVFAVGRMKSGPERELVERYFDRFAKAGPPLGLEFAGVSEIPESRGQTAQLRKAEEAQRIHEALDNAKSGGAKSGGTSSGGAALILLDERGKTLGSEAFAAIVGRMRDDGKRQLIVAIGGPDGHDPALRSRADLVLALGELTWPHQIARILIAEQLYRAATILAGHPYHRS</sequence>
<name>RLMH_BRUSU</name>
<gene>
    <name evidence="1" type="primary">rlmH</name>
    <name type="ordered locus">BR1840</name>
    <name type="ordered locus">BS1330_I1834</name>
</gene>
<evidence type="ECO:0000255" key="1">
    <source>
        <dbReference type="HAMAP-Rule" id="MF_00658"/>
    </source>
</evidence>
<proteinExistence type="inferred from homology"/>
<accession>P67517</accession>
<accession>G0K7Q6</accession>
<accession>Q8FYM5</accession>
<accession>Q8YJ75</accession>
<organism>
    <name type="scientific">Brucella suis biovar 1 (strain 1330)</name>
    <dbReference type="NCBI Taxonomy" id="204722"/>
    <lineage>
        <taxon>Bacteria</taxon>
        <taxon>Pseudomonadati</taxon>
        <taxon>Pseudomonadota</taxon>
        <taxon>Alphaproteobacteria</taxon>
        <taxon>Hyphomicrobiales</taxon>
        <taxon>Brucellaceae</taxon>
        <taxon>Brucella/Ochrobactrum group</taxon>
        <taxon>Brucella</taxon>
    </lineage>
</organism>